<gene>
    <name evidence="1" type="primary">fis</name>
    <name type="ordered locus">Tola_2534</name>
</gene>
<accession>C4LAF3</accession>
<sequence length="99" mass="11234">MLDQTLTSEALVTTVTHAQTHQPVQRPLRDSVQQALRNYLAQLNGQDVAELYDMVLSEVEAPMLDIIMQYTRGNQTRAAIMMGINRGTLRKKLKKYGMN</sequence>
<feature type="chain" id="PRO_1000203635" description="DNA-binding protein Fis">
    <location>
        <begin position="1"/>
        <end position="99"/>
    </location>
</feature>
<feature type="DNA-binding region" description="H-T-H motif" evidence="1">
    <location>
        <begin position="75"/>
        <end position="94"/>
    </location>
</feature>
<name>FIS_TOLAT</name>
<keyword id="KW-0010">Activator</keyword>
<keyword id="KW-0238">DNA-binding</keyword>
<keyword id="KW-1185">Reference proteome</keyword>
<keyword id="KW-0804">Transcription</keyword>
<keyword id="KW-0805">Transcription regulation</keyword>
<dbReference type="EMBL" id="CP001616">
    <property type="protein sequence ID" value="ACQ94128.1"/>
    <property type="molecule type" value="Genomic_DNA"/>
</dbReference>
<dbReference type="RefSeq" id="WP_015879577.1">
    <property type="nucleotide sequence ID" value="NC_012691.1"/>
</dbReference>
<dbReference type="SMR" id="C4LAF3"/>
<dbReference type="STRING" id="595494.Tola_2534"/>
<dbReference type="KEGG" id="tau:Tola_2534"/>
<dbReference type="eggNOG" id="COG2901">
    <property type="taxonomic scope" value="Bacteria"/>
</dbReference>
<dbReference type="HOGENOM" id="CLU_158040_3_0_6"/>
<dbReference type="OrthoDB" id="9802388at2"/>
<dbReference type="Proteomes" id="UP000009073">
    <property type="component" value="Chromosome"/>
</dbReference>
<dbReference type="GO" id="GO:0003700">
    <property type="term" value="F:DNA-binding transcription factor activity"/>
    <property type="evidence" value="ECO:0007669"/>
    <property type="project" value="UniProtKB-UniRule"/>
</dbReference>
<dbReference type="GO" id="GO:0043565">
    <property type="term" value="F:sequence-specific DNA binding"/>
    <property type="evidence" value="ECO:0007669"/>
    <property type="project" value="InterPro"/>
</dbReference>
<dbReference type="FunFam" id="1.10.10.60:FF:000006">
    <property type="entry name" value="DNA-binding protein Fis"/>
    <property type="match status" value="1"/>
</dbReference>
<dbReference type="Gene3D" id="1.10.10.60">
    <property type="entry name" value="Homeodomain-like"/>
    <property type="match status" value="1"/>
</dbReference>
<dbReference type="HAMAP" id="MF_00166">
    <property type="entry name" value="DNA_binding_Fis"/>
    <property type="match status" value="1"/>
</dbReference>
<dbReference type="InterPro" id="IPR005412">
    <property type="entry name" value="Fis_DNA-bd"/>
</dbReference>
<dbReference type="InterPro" id="IPR009057">
    <property type="entry name" value="Homeodomain-like_sf"/>
</dbReference>
<dbReference type="InterPro" id="IPR002197">
    <property type="entry name" value="HTH_Fis"/>
</dbReference>
<dbReference type="InterPro" id="IPR050207">
    <property type="entry name" value="Trans_regulatory_Fis"/>
</dbReference>
<dbReference type="NCBIfam" id="NF001659">
    <property type="entry name" value="PRK00430.1"/>
    <property type="match status" value="1"/>
</dbReference>
<dbReference type="PANTHER" id="PTHR47918">
    <property type="entry name" value="DNA-BINDING PROTEIN FIS"/>
    <property type="match status" value="1"/>
</dbReference>
<dbReference type="PANTHER" id="PTHR47918:SF1">
    <property type="entry name" value="DNA-BINDING PROTEIN FIS"/>
    <property type="match status" value="1"/>
</dbReference>
<dbReference type="Pfam" id="PF02954">
    <property type="entry name" value="HTH_8"/>
    <property type="match status" value="1"/>
</dbReference>
<dbReference type="PIRSF" id="PIRSF002097">
    <property type="entry name" value="DNA-binding_Fis"/>
    <property type="match status" value="1"/>
</dbReference>
<dbReference type="PRINTS" id="PR01591">
    <property type="entry name" value="DNABINDNGFIS"/>
</dbReference>
<dbReference type="PRINTS" id="PR01590">
    <property type="entry name" value="HTHFIS"/>
</dbReference>
<dbReference type="SUPFAM" id="SSF46689">
    <property type="entry name" value="Homeodomain-like"/>
    <property type="match status" value="1"/>
</dbReference>
<proteinExistence type="inferred from homology"/>
<reference key="1">
    <citation type="submission" date="2009-05" db="EMBL/GenBank/DDBJ databases">
        <title>Complete sequence of Tolumonas auensis DSM 9187.</title>
        <authorList>
            <consortium name="US DOE Joint Genome Institute"/>
            <person name="Lucas S."/>
            <person name="Copeland A."/>
            <person name="Lapidus A."/>
            <person name="Glavina del Rio T."/>
            <person name="Tice H."/>
            <person name="Bruce D."/>
            <person name="Goodwin L."/>
            <person name="Pitluck S."/>
            <person name="Chertkov O."/>
            <person name="Brettin T."/>
            <person name="Detter J.C."/>
            <person name="Han C."/>
            <person name="Larimer F."/>
            <person name="Land M."/>
            <person name="Hauser L."/>
            <person name="Kyrpides N."/>
            <person name="Mikhailova N."/>
            <person name="Spring S."/>
            <person name="Beller H."/>
        </authorList>
    </citation>
    <scope>NUCLEOTIDE SEQUENCE [LARGE SCALE GENOMIC DNA]</scope>
    <source>
        <strain>DSM 9187 / NBRC 110442 / TA 4</strain>
    </source>
</reference>
<organism>
    <name type="scientific">Tolumonas auensis (strain DSM 9187 / NBRC 110442 / TA 4)</name>
    <dbReference type="NCBI Taxonomy" id="595494"/>
    <lineage>
        <taxon>Bacteria</taxon>
        <taxon>Pseudomonadati</taxon>
        <taxon>Pseudomonadota</taxon>
        <taxon>Gammaproteobacteria</taxon>
        <taxon>Aeromonadales</taxon>
        <taxon>Aeromonadaceae</taxon>
        <taxon>Tolumonas</taxon>
    </lineage>
</organism>
<evidence type="ECO:0000255" key="1">
    <source>
        <dbReference type="HAMAP-Rule" id="MF_00166"/>
    </source>
</evidence>
<comment type="function">
    <text evidence="1">Activates ribosomal RNA transcription. Plays a direct role in upstream activation of rRNA promoters.</text>
</comment>
<comment type="subunit">
    <text evidence="1">Homodimer.</text>
</comment>
<comment type="similarity">
    <text evidence="1">Belongs to the transcriptional regulatory Fis family.</text>
</comment>
<protein>
    <recommendedName>
        <fullName evidence="1">DNA-binding protein Fis</fullName>
    </recommendedName>
</protein>